<evidence type="ECO:0000250" key="1"/>
<evidence type="ECO:0000250" key="2">
    <source>
        <dbReference type="UniProtKB" id="O75865"/>
    </source>
</evidence>
<evidence type="ECO:0000269" key="3">
    <source>
    </source>
</evidence>
<evidence type="ECO:0000303" key="4">
    <source>
    </source>
</evidence>
<evidence type="ECO:0000303" key="5">
    <source>
    </source>
</evidence>
<evidence type="ECO:0000305" key="6"/>
<evidence type="ECO:0000312" key="7">
    <source>
        <dbReference type="MGI" id="MGI:1914341"/>
    </source>
</evidence>
<evidence type="ECO:0007744" key="8">
    <source>
    </source>
</evidence>
<accession>Q78XR0</accession>
<accession>Q3KQP0</accession>
<accession>Q8C2C8</accession>
<accession>Q9CQ27</accession>
<accession>Q9D8H6</accession>
<protein>
    <recommendedName>
        <fullName evidence="2">Trafficking protein particle complex subunit 6A</fullName>
        <shortName>TRAPP complex subunit 6A</shortName>
    </recommendedName>
</protein>
<name>TPC6A_MOUSE</name>
<proteinExistence type="evidence at protein level"/>
<feature type="chain" id="PRO_0000211586" description="Trafficking protein particle complex subunit 6A">
    <location>
        <begin position="1"/>
        <end position="159"/>
    </location>
</feature>
<feature type="modified residue" description="Phosphoserine" evidence="8">
    <location>
        <position position="33"/>
    </location>
</feature>
<feature type="splice variant" id="VSP_019586" description="In isoform 2." evidence="4">
    <original>KFQVVIQKS</original>
    <variation>RLEAGAHRLWGGHMCFRQGNERAGRVPGGGTIP</variation>
    <location>
        <begin position="151"/>
        <end position="159"/>
    </location>
</feature>
<feature type="sequence conflict" description="In Ref. 1; BAB25415." evidence="6" ref="1">
    <original>A</original>
    <variation>V</variation>
    <location>
        <position position="4"/>
    </location>
</feature>
<feature type="sequence conflict" description="In Ref. 1; BAC40600." evidence="6" ref="1">
    <original>L</original>
    <variation>R</variation>
    <location>
        <position position="54"/>
    </location>
</feature>
<feature type="sequence conflict" description="In Ref. 1; BAB25415." evidence="6" ref="1">
    <original>C</original>
    <variation>S</variation>
    <location>
        <position position="70"/>
    </location>
</feature>
<feature type="sequence conflict" description="In Ref. 1; BAB25681." evidence="6" ref="1">
    <original>E</original>
    <variation>K</variation>
    <location>
        <position position="114"/>
    </location>
</feature>
<sequence length="159" mass="17430">MADAVLFEFLHTEMVAELWAPDPDPGSGGKRRSLSVLEGLGFRVGQALGERLPLETPAFREELDALKFLCRDLWAAMFQKHMDGLRTNHQGTYVLQDNSFPLLVTMGSGPQYLEEAPKFLAFTCGLLCGALHTLGFQSLVTASVASLPACKFQVVIQKS</sequence>
<gene>
    <name evidence="5 7" type="primary">Trappc6a</name>
</gene>
<dbReference type="EMBL" id="AK007965">
    <property type="protein sequence ID" value="BAB25376.1"/>
    <property type="molecule type" value="mRNA"/>
</dbReference>
<dbReference type="EMBL" id="AK008022">
    <property type="protein sequence ID" value="BAB25415.1"/>
    <property type="molecule type" value="mRNA"/>
</dbReference>
<dbReference type="EMBL" id="AK008462">
    <property type="protein sequence ID" value="BAB25681.2"/>
    <property type="molecule type" value="mRNA"/>
</dbReference>
<dbReference type="EMBL" id="AK088832">
    <property type="protein sequence ID" value="BAC40600.1"/>
    <property type="molecule type" value="mRNA"/>
</dbReference>
<dbReference type="EMBL" id="BC037154">
    <property type="protein sequence ID" value="AAH37154.1"/>
    <property type="molecule type" value="mRNA"/>
</dbReference>
<dbReference type="EMBL" id="BC106114">
    <property type="protein sequence ID" value="AAI06115.1"/>
    <property type="molecule type" value="mRNA"/>
</dbReference>
<dbReference type="CCDS" id="CCDS20905.1">
    <molecule id="Q78XR0-1"/>
</dbReference>
<dbReference type="CCDS" id="CCDS90174.1">
    <molecule id="Q78XR0-2"/>
</dbReference>
<dbReference type="RefSeq" id="NP_001318110.1">
    <molecule id="Q78XR0-2"/>
    <property type="nucleotide sequence ID" value="NM_001331181.1"/>
</dbReference>
<dbReference type="RefSeq" id="NP_080236.2">
    <molecule id="Q78XR0-1"/>
    <property type="nucleotide sequence ID" value="NM_025960.4"/>
</dbReference>
<dbReference type="SMR" id="Q78XR0"/>
<dbReference type="ComplexPortal" id="CPX-4766">
    <property type="entry name" value="TRAPP III complex"/>
</dbReference>
<dbReference type="FunCoup" id="Q78XR0">
    <property type="interactions" value="407"/>
</dbReference>
<dbReference type="STRING" id="10090.ENSMUSP00000002112"/>
<dbReference type="iPTMnet" id="Q78XR0"/>
<dbReference type="PhosphoSitePlus" id="Q78XR0"/>
<dbReference type="PaxDb" id="10090-ENSMUSP00000002112"/>
<dbReference type="ProteomicsDB" id="259500">
    <molecule id="Q78XR0-1"/>
</dbReference>
<dbReference type="ProteomicsDB" id="259501">
    <molecule id="Q78XR0-2"/>
</dbReference>
<dbReference type="Pumba" id="Q78XR0"/>
<dbReference type="Antibodypedia" id="49152">
    <property type="antibodies" value="131 antibodies from 26 providers"/>
</dbReference>
<dbReference type="Ensembl" id="ENSMUST00000002112.15">
    <molecule id="Q78XR0-1"/>
    <property type="protein sequence ID" value="ENSMUSP00000002112.9"/>
    <property type="gene ID" value="ENSMUSG00000002043.18"/>
</dbReference>
<dbReference type="Ensembl" id="ENSMUST00000108455.8">
    <molecule id="Q78XR0-2"/>
    <property type="protein sequence ID" value="ENSMUSP00000104095.2"/>
    <property type="gene ID" value="ENSMUSG00000002043.18"/>
</dbReference>
<dbReference type="GeneID" id="67091"/>
<dbReference type="KEGG" id="mmu:67091"/>
<dbReference type="UCSC" id="uc009fmb.1">
    <molecule id="Q78XR0-2"/>
    <property type="organism name" value="mouse"/>
</dbReference>
<dbReference type="UCSC" id="uc009fmc.1">
    <molecule id="Q78XR0-1"/>
    <property type="organism name" value="mouse"/>
</dbReference>
<dbReference type="AGR" id="MGI:1914341"/>
<dbReference type="CTD" id="79090"/>
<dbReference type="MGI" id="MGI:1914341">
    <property type="gene designation" value="Trappc6a"/>
</dbReference>
<dbReference type="VEuPathDB" id="HostDB:ENSMUSG00000002043"/>
<dbReference type="eggNOG" id="KOG3316">
    <property type="taxonomic scope" value="Eukaryota"/>
</dbReference>
<dbReference type="GeneTree" id="ENSGT00390000012948"/>
<dbReference type="HOGENOM" id="CLU_076409_3_1_1"/>
<dbReference type="InParanoid" id="Q78XR0"/>
<dbReference type="OMA" id="PACELHY"/>
<dbReference type="OrthoDB" id="32347at9989"/>
<dbReference type="PhylomeDB" id="Q78XR0"/>
<dbReference type="TreeFam" id="TF313010"/>
<dbReference type="Reactome" id="R-MMU-204005">
    <property type="pathway name" value="COPII-mediated vesicle transport"/>
</dbReference>
<dbReference type="Reactome" id="R-MMU-8876198">
    <property type="pathway name" value="RAB GEFs exchange GTP for GDP on RABs"/>
</dbReference>
<dbReference type="BioGRID-ORCS" id="67091">
    <property type="hits" value="6 hits in 78 CRISPR screens"/>
</dbReference>
<dbReference type="ChiTaRS" id="Trappc6a">
    <property type="organism name" value="mouse"/>
</dbReference>
<dbReference type="PRO" id="PR:Q78XR0"/>
<dbReference type="Proteomes" id="UP000000589">
    <property type="component" value="Chromosome 7"/>
</dbReference>
<dbReference type="RNAct" id="Q78XR0">
    <property type="molecule type" value="protein"/>
</dbReference>
<dbReference type="Bgee" id="ENSMUSG00000002043">
    <property type="expression patterns" value="Expressed in lip and 205 other cell types or tissues"/>
</dbReference>
<dbReference type="ExpressionAtlas" id="Q78XR0">
    <property type="expression patterns" value="baseline and differential"/>
</dbReference>
<dbReference type="GO" id="GO:0005737">
    <property type="term" value="C:cytoplasm"/>
    <property type="evidence" value="ECO:0000303"/>
    <property type="project" value="ComplexPortal"/>
</dbReference>
<dbReference type="GO" id="GO:0005783">
    <property type="term" value="C:endoplasmic reticulum"/>
    <property type="evidence" value="ECO:0007669"/>
    <property type="project" value="UniProtKB-SubCell"/>
</dbReference>
<dbReference type="GO" id="GO:1990072">
    <property type="term" value="C:TRAPPIII protein complex"/>
    <property type="evidence" value="ECO:0000303"/>
    <property type="project" value="ComplexPortal"/>
</dbReference>
<dbReference type="GO" id="GO:0048208">
    <property type="term" value="P:COPII vesicle coating"/>
    <property type="evidence" value="ECO:0000303"/>
    <property type="project" value="ComplexPortal"/>
</dbReference>
<dbReference type="GO" id="GO:0006888">
    <property type="term" value="P:endoplasmic reticulum to Golgi vesicle-mediated transport"/>
    <property type="evidence" value="ECO:0000303"/>
    <property type="project" value="ComplexPortal"/>
</dbReference>
<dbReference type="GO" id="GO:0099022">
    <property type="term" value="P:vesicle tethering"/>
    <property type="evidence" value="ECO:0000303"/>
    <property type="project" value="ComplexPortal"/>
</dbReference>
<dbReference type="CDD" id="cd14944">
    <property type="entry name" value="TRAPPC6A_Trs33"/>
    <property type="match status" value="1"/>
</dbReference>
<dbReference type="FunFam" id="3.30.1380.20:FF:000009">
    <property type="entry name" value="Trafficking protein particle complex subunit 6A"/>
    <property type="match status" value="1"/>
</dbReference>
<dbReference type="Gene3D" id="3.30.1380.20">
    <property type="entry name" value="Trafficking protein particle complex subunit 3"/>
    <property type="match status" value="1"/>
</dbReference>
<dbReference type="InterPro" id="IPR024096">
    <property type="entry name" value="NO_sig/Golgi_transp_ligand-bd"/>
</dbReference>
<dbReference type="InterPro" id="IPR007194">
    <property type="entry name" value="TRAPP_component"/>
</dbReference>
<dbReference type="InterPro" id="IPR037992">
    <property type="entry name" value="TRAPPC6/Trs33"/>
</dbReference>
<dbReference type="PANTHER" id="PTHR12817:SF2">
    <property type="entry name" value="TRAFFICKING PROTEIN PARTICLE COMPLEX SUBUNIT 6A"/>
    <property type="match status" value="1"/>
</dbReference>
<dbReference type="PANTHER" id="PTHR12817">
    <property type="entry name" value="TRAFFICKING PROTEIN PARTICLE COMPLEX SUBUNIT 6B"/>
    <property type="match status" value="1"/>
</dbReference>
<dbReference type="Pfam" id="PF04051">
    <property type="entry name" value="TRAPP"/>
    <property type="match status" value="1"/>
</dbReference>
<dbReference type="SUPFAM" id="SSF111126">
    <property type="entry name" value="Ligand-binding domain in the NO signalling and Golgi transport"/>
    <property type="match status" value="1"/>
</dbReference>
<comment type="function">
    <text evidence="3">May play a role in vesicular transport during the biogenesis of melanosomes.</text>
</comment>
<comment type="subunit">
    <text evidence="2">Part of the multisubunit transport protein particle (TRAPP) complex. Heterodimer with TRAPPC3 (By similarity). The heterodimer TRAPPC3-TRAPPC6A interacts with TRAPPC2L. Interacts with TRAPPC2L (By similarity).</text>
</comment>
<comment type="subcellular location">
    <subcellularLocation>
        <location evidence="1">Golgi apparatus</location>
        <location evidence="1">cis-Golgi network</location>
    </subcellularLocation>
    <subcellularLocation>
        <location evidence="1">Endoplasmic reticulum</location>
    </subcellularLocation>
</comment>
<comment type="alternative products">
    <event type="alternative splicing"/>
    <isoform>
        <id>Q78XR0-1</id>
        <name>1</name>
        <sequence type="displayed"/>
    </isoform>
    <isoform>
        <id>Q78XR0-2</id>
        <name>2</name>
        <sequence type="described" ref="VSP_019586"/>
    </isoform>
</comment>
<comment type="tissue specificity">
    <text evidence="3">Ubiquitous, with lowest expression in skeletal muscle and brain and highest in kidney, liver and testis, as well as in cultured melanocytes.</text>
</comment>
<comment type="similarity">
    <text evidence="6">Belongs to the TRAPP small subunits family. BET3 subfamily.</text>
</comment>
<reference key="1">
    <citation type="journal article" date="2005" name="Science">
        <title>The transcriptional landscape of the mammalian genome.</title>
        <authorList>
            <person name="Carninci P."/>
            <person name="Kasukawa T."/>
            <person name="Katayama S."/>
            <person name="Gough J."/>
            <person name="Frith M.C."/>
            <person name="Maeda N."/>
            <person name="Oyama R."/>
            <person name="Ravasi T."/>
            <person name="Lenhard B."/>
            <person name="Wells C."/>
            <person name="Kodzius R."/>
            <person name="Shimokawa K."/>
            <person name="Bajic V.B."/>
            <person name="Brenner S.E."/>
            <person name="Batalov S."/>
            <person name="Forrest A.R."/>
            <person name="Zavolan M."/>
            <person name="Davis M.J."/>
            <person name="Wilming L.G."/>
            <person name="Aidinis V."/>
            <person name="Allen J.E."/>
            <person name="Ambesi-Impiombato A."/>
            <person name="Apweiler R."/>
            <person name="Aturaliya R.N."/>
            <person name="Bailey T.L."/>
            <person name="Bansal M."/>
            <person name="Baxter L."/>
            <person name="Beisel K.W."/>
            <person name="Bersano T."/>
            <person name="Bono H."/>
            <person name="Chalk A.M."/>
            <person name="Chiu K.P."/>
            <person name="Choudhary V."/>
            <person name="Christoffels A."/>
            <person name="Clutterbuck D.R."/>
            <person name="Crowe M.L."/>
            <person name="Dalla E."/>
            <person name="Dalrymple B.P."/>
            <person name="de Bono B."/>
            <person name="Della Gatta G."/>
            <person name="di Bernardo D."/>
            <person name="Down T."/>
            <person name="Engstrom P."/>
            <person name="Fagiolini M."/>
            <person name="Faulkner G."/>
            <person name="Fletcher C.F."/>
            <person name="Fukushima T."/>
            <person name="Furuno M."/>
            <person name="Futaki S."/>
            <person name="Gariboldi M."/>
            <person name="Georgii-Hemming P."/>
            <person name="Gingeras T.R."/>
            <person name="Gojobori T."/>
            <person name="Green R.E."/>
            <person name="Gustincich S."/>
            <person name="Harbers M."/>
            <person name="Hayashi Y."/>
            <person name="Hensch T.K."/>
            <person name="Hirokawa N."/>
            <person name="Hill D."/>
            <person name="Huminiecki L."/>
            <person name="Iacono M."/>
            <person name="Ikeo K."/>
            <person name="Iwama A."/>
            <person name="Ishikawa T."/>
            <person name="Jakt M."/>
            <person name="Kanapin A."/>
            <person name="Katoh M."/>
            <person name="Kawasawa Y."/>
            <person name="Kelso J."/>
            <person name="Kitamura H."/>
            <person name="Kitano H."/>
            <person name="Kollias G."/>
            <person name="Krishnan S.P."/>
            <person name="Kruger A."/>
            <person name="Kummerfeld S.K."/>
            <person name="Kurochkin I.V."/>
            <person name="Lareau L.F."/>
            <person name="Lazarevic D."/>
            <person name="Lipovich L."/>
            <person name="Liu J."/>
            <person name="Liuni S."/>
            <person name="McWilliam S."/>
            <person name="Madan Babu M."/>
            <person name="Madera M."/>
            <person name="Marchionni L."/>
            <person name="Matsuda H."/>
            <person name="Matsuzawa S."/>
            <person name="Miki H."/>
            <person name="Mignone F."/>
            <person name="Miyake S."/>
            <person name="Morris K."/>
            <person name="Mottagui-Tabar S."/>
            <person name="Mulder N."/>
            <person name="Nakano N."/>
            <person name="Nakauchi H."/>
            <person name="Ng P."/>
            <person name="Nilsson R."/>
            <person name="Nishiguchi S."/>
            <person name="Nishikawa S."/>
            <person name="Nori F."/>
            <person name="Ohara O."/>
            <person name="Okazaki Y."/>
            <person name="Orlando V."/>
            <person name="Pang K.C."/>
            <person name="Pavan W.J."/>
            <person name="Pavesi G."/>
            <person name="Pesole G."/>
            <person name="Petrovsky N."/>
            <person name="Piazza S."/>
            <person name="Reed J."/>
            <person name="Reid J.F."/>
            <person name="Ring B.Z."/>
            <person name="Ringwald M."/>
            <person name="Rost B."/>
            <person name="Ruan Y."/>
            <person name="Salzberg S.L."/>
            <person name="Sandelin A."/>
            <person name="Schneider C."/>
            <person name="Schoenbach C."/>
            <person name="Sekiguchi K."/>
            <person name="Semple C.A."/>
            <person name="Seno S."/>
            <person name="Sessa L."/>
            <person name="Sheng Y."/>
            <person name="Shibata Y."/>
            <person name="Shimada H."/>
            <person name="Shimada K."/>
            <person name="Silva D."/>
            <person name="Sinclair B."/>
            <person name="Sperling S."/>
            <person name="Stupka E."/>
            <person name="Sugiura K."/>
            <person name="Sultana R."/>
            <person name="Takenaka Y."/>
            <person name="Taki K."/>
            <person name="Tammoja K."/>
            <person name="Tan S.L."/>
            <person name="Tang S."/>
            <person name="Taylor M.S."/>
            <person name="Tegner J."/>
            <person name="Teichmann S.A."/>
            <person name="Ueda H.R."/>
            <person name="van Nimwegen E."/>
            <person name="Verardo R."/>
            <person name="Wei C.L."/>
            <person name="Yagi K."/>
            <person name="Yamanishi H."/>
            <person name="Zabarovsky E."/>
            <person name="Zhu S."/>
            <person name="Zimmer A."/>
            <person name="Hide W."/>
            <person name="Bult C."/>
            <person name="Grimmond S.M."/>
            <person name="Teasdale R.D."/>
            <person name="Liu E.T."/>
            <person name="Brusic V."/>
            <person name="Quackenbush J."/>
            <person name="Wahlestedt C."/>
            <person name="Mattick J.S."/>
            <person name="Hume D.A."/>
            <person name="Kai C."/>
            <person name="Sasaki D."/>
            <person name="Tomaru Y."/>
            <person name="Fukuda S."/>
            <person name="Kanamori-Katayama M."/>
            <person name="Suzuki M."/>
            <person name="Aoki J."/>
            <person name="Arakawa T."/>
            <person name="Iida J."/>
            <person name="Imamura K."/>
            <person name="Itoh M."/>
            <person name="Kato T."/>
            <person name="Kawaji H."/>
            <person name="Kawagashira N."/>
            <person name="Kawashima T."/>
            <person name="Kojima M."/>
            <person name="Kondo S."/>
            <person name="Konno H."/>
            <person name="Nakano K."/>
            <person name="Ninomiya N."/>
            <person name="Nishio T."/>
            <person name="Okada M."/>
            <person name="Plessy C."/>
            <person name="Shibata K."/>
            <person name="Shiraki T."/>
            <person name="Suzuki S."/>
            <person name="Tagami M."/>
            <person name="Waki K."/>
            <person name="Watahiki A."/>
            <person name="Okamura-Oho Y."/>
            <person name="Suzuki H."/>
            <person name="Kawai J."/>
            <person name="Hayashizaki Y."/>
        </authorList>
    </citation>
    <scope>NUCLEOTIDE SEQUENCE [LARGE SCALE MRNA] (ISOFORM 1)</scope>
    <source>
        <strain>C57BL/6J</strain>
        <strain>NOD</strain>
        <tissue>Pancreas</tissue>
        <tissue>Small intestine</tissue>
        <tissue>Thymus</tissue>
    </source>
</reference>
<reference key="2">
    <citation type="journal article" date="2004" name="Genome Res.">
        <title>The status, quality, and expansion of the NIH full-length cDNA project: the Mammalian Gene Collection (MGC).</title>
        <authorList>
            <consortium name="The MGC Project Team"/>
        </authorList>
    </citation>
    <scope>NUCLEOTIDE SEQUENCE [LARGE SCALE MRNA] (ISOFORMS 1 AND 2)</scope>
    <source>
        <strain>FVB/N</strain>
        <tissue>Mammary tumor</tissue>
        <tissue>Salivary gland</tissue>
    </source>
</reference>
<reference key="3">
    <citation type="journal article" date="2006" name="Genomics">
        <title>A mouse TRAPP-related protein is involved in pigmentation.</title>
        <authorList>
            <person name="Gwynn B."/>
            <person name="Smith R.S."/>
            <person name="Rowe L.B."/>
            <person name="Taylor B.A."/>
            <person name="Peters L.L."/>
        </authorList>
    </citation>
    <scope>FUNCTION</scope>
    <scope>TISSUE SPECIFICITY</scope>
</reference>
<reference key="4">
    <citation type="journal article" date="2010" name="Cell">
        <title>A tissue-specific atlas of mouse protein phosphorylation and expression.</title>
        <authorList>
            <person name="Huttlin E.L."/>
            <person name="Jedrychowski M.P."/>
            <person name="Elias J.E."/>
            <person name="Goswami T."/>
            <person name="Rad R."/>
            <person name="Beausoleil S.A."/>
            <person name="Villen J."/>
            <person name="Haas W."/>
            <person name="Sowa M.E."/>
            <person name="Gygi S.P."/>
        </authorList>
    </citation>
    <scope>PHOSPHORYLATION [LARGE SCALE ANALYSIS] AT SER-33</scope>
    <scope>IDENTIFICATION BY MASS SPECTROMETRY [LARGE SCALE ANALYSIS]</scope>
    <source>
        <tissue>Kidney</tissue>
    </source>
</reference>
<organism>
    <name type="scientific">Mus musculus</name>
    <name type="common">Mouse</name>
    <dbReference type="NCBI Taxonomy" id="10090"/>
    <lineage>
        <taxon>Eukaryota</taxon>
        <taxon>Metazoa</taxon>
        <taxon>Chordata</taxon>
        <taxon>Craniata</taxon>
        <taxon>Vertebrata</taxon>
        <taxon>Euteleostomi</taxon>
        <taxon>Mammalia</taxon>
        <taxon>Eutheria</taxon>
        <taxon>Euarchontoglires</taxon>
        <taxon>Glires</taxon>
        <taxon>Rodentia</taxon>
        <taxon>Myomorpha</taxon>
        <taxon>Muroidea</taxon>
        <taxon>Muridae</taxon>
        <taxon>Murinae</taxon>
        <taxon>Mus</taxon>
        <taxon>Mus</taxon>
    </lineage>
</organism>
<keyword id="KW-0025">Alternative splicing</keyword>
<keyword id="KW-0256">Endoplasmic reticulum</keyword>
<keyword id="KW-0931">ER-Golgi transport</keyword>
<keyword id="KW-0333">Golgi apparatus</keyword>
<keyword id="KW-0597">Phosphoprotein</keyword>
<keyword id="KW-1185">Reference proteome</keyword>
<keyword id="KW-0813">Transport</keyword>